<accession>Q5URB8</accession>
<reference key="1">
    <citation type="journal article" date="2004" name="Science">
        <title>The 1.2-megabase genome sequence of Mimivirus.</title>
        <authorList>
            <person name="Raoult D."/>
            <person name="Audic S."/>
            <person name="Robert C."/>
            <person name="Abergel C."/>
            <person name="Renesto P."/>
            <person name="Ogata H."/>
            <person name="La Scola B."/>
            <person name="Susan M."/>
            <person name="Claverie J.-M."/>
        </authorList>
    </citation>
    <scope>NUCLEOTIDE SEQUENCE [LARGE SCALE GENOMIC DNA]</scope>
    <source>
        <strain>Rowbotham-Bradford</strain>
    </source>
</reference>
<protein>
    <recommendedName>
        <fullName>Putative ankyrin repeat protein R841</fullName>
    </recommendedName>
</protein>
<organism>
    <name type="scientific">Acanthamoeba polyphaga mimivirus</name>
    <name type="common">APMV</name>
    <dbReference type="NCBI Taxonomy" id="212035"/>
    <lineage>
        <taxon>Viruses</taxon>
        <taxon>Varidnaviria</taxon>
        <taxon>Bamfordvirae</taxon>
        <taxon>Nucleocytoviricota</taxon>
        <taxon>Megaviricetes</taxon>
        <taxon>Imitervirales</taxon>
        <taxon>Mimiviridae</taxon>
        <taxon>Megamimivirinae</taxon>
        <taxon>Mimivirus</taxon>
        <taxon>Mimivirus bradfordmassiliense</taxon>
    </lineage>
</organism>
<gene>
    <name type="ordered locus">MIMI_R841</name>
</gene>
<organismHost>
    <name type="scientific">Acanthamoeba polyphaga</name>
    <name type="common">Amoeba</name>
    <dbReference type="NCBI Taxonomy" id="5757"/>
</organismHost>
<feature type="chain" id="PRO_0000067210" description="Putative ankyrin repeat protein R841">
    <location>
        <begin position="1"/>
        <end position="601"/>
    </location>
</feature>
<feature type="repeat" description="ANK 1">
    <location>
        <begin position="17"/>
        <end position="50"/>
    </location>
</feature>
<feature type="repeat" description="ANK 2">
    <location>
        <begin position="54"/>
        <end position="86"/>
    </location>
</feature>
<feature type="repeat" description="ANK 3">
    <location>
        <begin position="91"/>
        <end position="123"/>
    </location>
</feature>
<feature type="repeat" description="ANK 4">
    <location>
        <begin position="165"/>
        <end position="197"/>
    </location>
</feature>
<feature type="repeat" description="ANK 5">
    <location>
        <begin position="201"/>
        <end position="234"/>
    </location>
</feature>
<feature type="repeat" description="ANK 6">
    <location>
        <begin position="238"/>
        <end position="269"/>
    </location>
</feature>
<feature type="repeat" description="ANK 7">
    <location>
        <begin position="274"/>
        <end position="310"/>
    </location>
</feature>
<feature type="repeat" description="ANK 8">
    <location>
        <begin position="314"/>
        <end position="349"/>
    </location>
</feature>
<feature type="repeat" description="ANK 9">
    <location>
        <begin position="361"/>
        <end position="390"/>
    </location>
</feature>
<feature type="repeat" description="ANK 10">
    <location>
        <begin position="397"/>
        <end position="427"/>
    </location>
</feature>
<feature type="repeat" description="ANK 11">
    <location>
        <begin position="432"/>
        <end position="463"/>
    </location>
</feature>
<feature type="repeat" description="ANK 12">
    <location>
        <begin position="467"/>
        <end position="500"/>
    </location>
</feature>
<name>YR841_MIMIV</name>
<proteinExistence type="predicted"/>
<keyword id="KW-0040">ANK repeat</keyword>
<keyword id="KW-1185">Reference proteome</keyword>
<keyword id="KW-0677">Repeat</keyword>
<sequence>MDQINVLINKLIYDTMNNITSLMLAVSNYEIHDNYDTVKSLIDCGFDVNAVDKHGKSVLMYAINIDSDKNINVIKLLIDHGADVNHVDSYQRSVLIHTCMYMEYGYNNKTISLLIDKGANINYICNGKNILMMIHKYLSEETFQEVFHLINNKIDINYNRSGIIRENILMRIIKKLDNKYSITTIKLLLEHGINIDHINIYGQTALMYACIYINGLKNIPIIKLLLEYGANINSKCTKGWSPLMSVFKNDIIDIKTIKFLVEKGAEINSKNCKNETMLYVFCKKLSTRIYGQACVKIFDFLIKKGISIDNPNDKGYTPLMAFIIKISEYNEYTEKFIKLLLDYGANINSKDIHGSSILNKVCCDVVSGSVSHCKIEIINTLIKYGADVNSTTLDHKTILMNLRYSIHSENYITVLEILLRNGANPNIYDEKYHKFPLLIDILNRGGELRIIKLMLQYNIDPNIVDNIGNNALLFVAKHYKKNERFSFLKLLLTYGASYNCVNKKGKSFSDYVLDKEVEYYSRTITNLSKDNRIMKNVIDSIPIKVPEKIYCLESFKMKIIRFKWNLCNRIDYDDEAIMNYLGTNDPVRLIQIIDESIKYDH</sequence>
<dbReference type="EMBL" id="AY653733">
    <property type="protein sequence ID" value="AAV51099.1"/>
    <property type="molecule type" value="Genomic_DNA"/>
</dbReference>
<dbReference type="SMR" id="Q5URB8"/>
<dbReference type="Proteomes" id="UP000001134">
    <property type="component" value="Genome"/>
</dbReference>
<dbReference type="Gene3D" id="1.25.40.20">
    <property type="entry name" value="Ankyrin repeat-containing domain"/>
    <property type="match status" value="5"/>
</dbReference>
<dbReference type="InterPro" id="IPR002110">
    <property type="entry name" value="Ankyrin_rpt"/>
</dbReference>
<dbReference type="InterPro" id="IPR036770">
    <property type="entry name" value="Ankyrin_rpt-contain_sf"/>
</dbReference>
<dbReference type="InterPro" id="IPR050745">
    <property type="entry name" value="Multifunctional_regulatory"/>
</dbReference>
<dbReference type="PANTHER" id="PTHR24189:SF50">
    <property type="entry name" value="ANKYRIN REPEAT AND SOCS BOX PROTEIN 2"/>
    <property type="match status" value="1"/>
</dbReference>
<dbReference type="PANTHER" id="PTHR24189">
    <property type="entry name" value="MYOTROPHIN"/>
    <property type="match status" value="1"/>
</dbReference>
<dbReference type="Pfam" id="PF00023">
    <property type="entry name" value="Ank"/>
    <property type="match status" value="1"/>
</dbReference>
<dbReference type="Pfam" id="PF12796">
    <property type="entry name" value="Ank_2"/>
    <property type="match status" value="2"/>
</dbReference>
<dbReference type="SMART" id="SM00248">
    <property type="entry name" value="ANK"/>
    <property type="match status" value="12"/>
</dbReference>
<dbReference type="SUPFAM" id="SSF48403">
    <property type="entry name" value="Ankyrin repeat"/>
    <property type="match status" value="2"/>
</dbReference>
<dbReference type="PROSITE" id="PS50297">
    <property type="entry name" value="ANK_REP_REGION"/>
    <property type="match status" value="1"/>
</dbReference>
<dbReference type="PROSITE" id="PS50088">
    <property type="entry name" value="ANK_REPEAT"/>
    <property type="match status" value="4"/>
</dbReference>